<sequence>METSKEKTITSPGPYIVRLLNSSLNGCEFPLLTGRTLFVVGQSDALTASGQLPDIPADSFFIPLDHGGVNFEIQVDTDATEIILHELKEGNSESRSVQLNTPIQVGELLILIRPESEPWVPEQPEKLETSAKKNEPRFKNGIVAALAGFFILGIGTVGTLWILNSPQRQAAELDSLLGQEKERFQVLPGRDKMLYVAAQNERDTLWARQVLARGDYDKNARVINENEENKRISIWLDTYYPQLAYYRIHFDEPRKPVFWLSRQRNTMSKKELEVLSQKLRALMPYADSVNITLMDDVTAAGQAEAGLKQQALPYSRRNHKGGVTFVIQGALDDVEILRARQFVDSYYRTWGGRYVQFAIELKDDWLKGRSFQYGAEGYIKMSPGHWYFPSPL</sequence>
<gene>
    <name type="primary">prgH</name>
    <name type="ordered locus">STM2874</name>
</gene>
<comment type="function">
    <text>Required for invasion of epithelial cells.</text>
</comment>
<comment type="subcellular location">
    <subcellularLocation>
        <location evidence="2">Cell membrane</location>
        <topology evidence="2">Single-pass membrane protein</topology>
    </subcellularLocation>
</comment>
<feature type="chain" id="PRO_0000058571" description="Protein PrgH">
    <location>
        <begin position="1"/>
        <end position="392"/>
    </location>
</feature>
<feature type="transmembrane region" description="Helical" evidence="1">
    <location>
        <begin position="142"/>
        <end position="162"/>
    </location>
</feature>
<feature type="strand" evidence="5">
    <location>
        <begin position="15"/>
        <end position="22"/>
    </location>
</feature>
<feature type="turn" evidence="5">
    <location>
        <begin position="23"/>
        <end position="26"/>
    </location>
</feature>
<feature type="strand" evidence="5">
    <location>
        <begin position="28"/>
        <end position="30"/>
    </location>
</feature>
<feature type="strand" evidence="5">
    <location>
        <begin position="33"/>
        <end position="42"/>
    </location>
</feature>
<feature type="helix" evidence="5">
    <location>
        <begin position="43"/>
        <end position="49"/>
    </location>
</feature>
<feature type="strand" evidence="5">
    <location>
        <begin position="54"/>
        <end position="56"/>
    </location>
</feature>
<feature type="strand" evidence="5">
    <location>
        <begin position="59"/>
        <end position="63"/>
    </location>
</feature>
<feature type="strand" evidence="5">
    <location>
        <begin position="65"/>
        <end position="67"/>
    </location>
</feature>
<feature type="strand" evidence="5">
    <location>
        <begin position="71"/>
        <end position="75"/>
    </location>
</feature>
<feature type="strand" evidence="5">
    <location>
        <begin position="82"/>
        <end position="88"/>
    </location>
</feature>
<feature type="strand" evidence="5">
    <location>
        <begin position="91"/>
        <end position="96"/>
    </location>
</feature>
<feature type="strand" evidence="5">
    <location>
        <begin position="103"/>
        <end position="105"/>
    </location>
</feature>
<feature type="strand" evidence="5">
    <location>
        <begin position="108"/>
        <end position="114"/>
    </location>
</feature>
<feature type="helix" evidence="4">
    <location>
        <begin position="173"/>
        <end position="177"/>
    </location>
</feature>
<feature type="helix" evidence="3">
    <location>
        <begin position="178"/>
        <end position="180"/>
    </location>
</feature>
<feature type="turn" evidence="3">
    <location>
        <begin position="181"/>
        <end position="183"/>
    </location>
</feature>
<feature type="strand" evidence="4">
    <location>
        <begin position="184"/>
        <end position="188"/>
    </location>
</feature>
<feature type="strand" evidence="6">
    <location>
        <begin position="190"/>
        <end position="192"/>
    </location>
</feature>
<feature type="strand" evidence="4">
    <location>
        <begin position="194"/>
        <end position="200"/>
    </location>
</feature>
<feature type="helix" evidence="4">
    <location>
        <begin position="201"/>
        <end position="212"/>
    </location>
</feature>
<feature type="turn" evidence="4">
    <location>
        <begin position="215"/>
        <end position="219"/>
    </location>
</feature>
<feature type="strand" evidence="4">
    <location>
        <begin position="220"/>
        <end position="223"/>
    </location>
</feature>
<feature type="helix" evidence="4">
    <location>
        <begin position="225"/>
        <end position="239"/>
    </location>
</feature>
<feature type="strand" evidence="4">
    <location>
        <begin position="245"/>
        <end position="249"/>
    </location>
</feature>
<feature type="strand" evidence="4">
    <location>
        <begin position="257"/>
        <end position="261"/>
    </location>
</feature>
<feature type="turn" evidence="4">
    <location>
        <begin position="262"/>
        <end position="264"/>
    </location>
</feature>
<feature type="helix" evidence="4">
    <location>
        <begin position="269"/>
        <end position="282"/>
    </location>
</feature>
<feature type="strand" evidence="4">
    <location>
        <begin position="290"/>
        <end position="294"/>
    </location>
</feature>
<feature type="helix" evidence="4">
    <location>
        <begin position="296"/>
        <end position="309"/>
    </location>
</feature>
<feature type="strand" evidence="4">
    <location>
        <begin position="314"/>
        <end position="319"/>
    </location>
</feature>
<feature type="strand" evidence="4">
    <location>
        <begin position="322"/>
        <end position="329"/>
    </location>
</feature>
<feature type="helix" evidence="4">
    <location>
        <begin position="333"/>
        <end position="350"/>
    </location>
</feature>
<feature type="strand" evidence="4">
    <location>
        <begin position="352"/>
        <end position="361"/>
    </location>
</feature>
<dbReference type="EMBL" id="U21676">
    <property type="protein sequence ID" value="AAB60188.1"/>
    <property type="molecule type" value="Genomic_DNA"/>
</dbReference>
<dbReference type="EMBL" id="AE006468">
    <property type="protein sequence ID" value="AAL21754.1"/>
    <property type="molecule type" value="Genomic_DNA"/>
</dbReference>
<dbReference type="PIR" id="S69788">
    <property type="entry name" value="S69788"/>
</dbReference>
<dbReference type="RefSeq" id="NP_461795.1">
    <property type="nucleotide sequence ID" value="NC_003197.2"/>
</dbReference>
<dbReference type="RefSeq" id="WP_000450192.1">
    <property type="nucleotide sequence ID" value="NC_003197.2"/>
</dbReference>
<dbReference type="PDB" id="2Y9J">
    <property type="method" value="EM"/>
    <property type="resolution" value="6.40 A"/>
    <property type="chains" value="A/B/C/D/E/F/G/H/I/J/K/L/M/N/O/P/Q/R/S/T/U/V/W/X=177-362"/>
</dbReference>
<dbReference type="PDB" id="3GR0">
    <property type="method" value="X-ray"/>
    <property type="resolution" value="2.30 A"/>
    <property type="chains" value="A/B/C/D=170-362"/>
</dbReference>
<dbReference type="PDB" id="3GR1">
    <property type="method" value="X-ray"/>
    <property type="resolution" value="2.80 A"/>
    <property type="chains" value="A/B/C/D/E/F/G/H=170-392"/>
</dbReference>
<dbReference type="PDB" id="3J1W">
    <property type="method" value="EM"/>
    <property type="chains" value="A/B/C/D/E/F/G/H/I/J/K/L/M/N/O/P/Q/R/S/T/U/V/W/X=14-119"/>
</dbReference>
<dbReference type="PDB" id="3J1X">
    <property type="method" value="EM"/>
    <property type="chains" value="A/B/C/D/E/F/G/H/I/J/K/L/M/N/O/P/Q/R/S/T/U/V/W/X=173-363"/>
</dbReference>
<dbReference type="PDB" id="3J6D">
    <property type="method" value="EM"/>
    <property type="chains" value="A/B/C/D/E/F/G/H/I/J/K/L/M/N/O/P/Q/R/S/T/U/V/W/X=1-392"/>
</dbReference>
<dbReference type="PDB" id="4G1I">
    <property type="method" value="X-ray"/>
    <property type="resolution" value="1.85 A"/>
    <property type="chains" value="A/B=170-392"/>
</dbReference>
<dbReference type="PDB" id="4G2S">
    <property type="method" value="X-ray"/>
    <property type="resolution" value="1.86 A"/>
    <property type="chains" value="A/B/C/D/E/F=11-119"/>
</dbReference>
<dbReference type="PDB" id="5TCP">
    <property type="method" value="EM"/>
    <property type="resolution" value="4.30 A"/>
    <property type="chains" value="1/3/5/7/9/A/C/E/G/I/K/M/O/Q/S/U/W/Y/b/d/f/h/j/l=130-392"/>
</dbReference>
<dbReference type="PDB" id="5TCR">
    <property type="method" value="EM"/>
    <property type="resolution" value="6.30 A"/>
    <property type="chains" value="0/10/2/4/6/8/Q/S/U/W/Y/Z/b/d/f/h/j/l/n/p/r/t/v/x=130-392"/>
</dbReference>
<dbReference type="PDB" id="6DUZ">
    <property type="method" value="EM"/>
    <property type="resolution" value="3.60 A"/>
    <property type="chains" value="A/B/C/D/E/F/G/H/I/J/K/L/M/N/O/P/Q/R/S/T/U/V/W/X=1-392"/>
</dbReference>
<dbReference type="PDB" id="6PEM">
    <property type="method" value="EM"/>
    <property type="resolution" value="3.50 A"/>
    <property type="chains" value="E/R/S/T/U/V/W/X/Y/Z/a/b/c/d/e/f/g/h/i/j/k/l/m/n=1-392"/>
</dbReference>
<dbReference type="PDB" id="6PEP">
    <property type="method" value="EM"/>
    <property type="resolution" value="3.80 A"/>
    <property type="chains" value="E/R/S/T/U/V/W/X/Y/Z/a/b/c/d/e/f/g/h/i/j/k/l/m/n=1-392"/>
</dbReference>
<dbReference type="PDB" id="6Q14">
    <property type="method" value="EM"/>
    <property type="resolution" value="3.80 A"/>
    <property type="chains" value="E/R/S/T/U/V/W/X/Y/Z/a/b/c/d/e/f/g/h/i/j/k/l/m/n=1-392"/>
</dbReference>
<dbReference type="PDB" id="6Q15">
    <property type="method" value="EM"/>
    <property type="resolution" value="5.15 A"/>
    <property type="chains" value="E/R/S/T/U/V/W/X/Y/Z/a/b/c/d/e/f/g/h/i/j/k/l/m/n=1-392"/>
</dbReference>
<dbReference type="PDB" id="6Q16">
    <property type="method" value="EM"/>
    <property type="resolution" value="4.10 A"/>
    <property type="chains" value="E/R/S/T/U/V/W/X/Y/Z/a/b/c/d/e/f/g/h/i/j/k/l/m/n=1-392"/>
</dbReference>
<dbReference type="PDB" id="6UOT">
    <property type="method" value="EM"/>
    <property type="resolution" value="3.30 A"/>
    <property type="chains" value="A/B/C/D/E/F/G/H/I/J/K/L/M/N/O/P/Q/R/S/T/U/V/W/X=1-392"/>
</dbReference>
<dbReference type="PDB" id="6UOV">
    <property type="method" value="EM"/>
    <property type="resolution" value="3.50 A"/>
    <property type="chains" value="B/D/F/H/J/L/N/P/R/T/V/X/Z/b/d/f/h/j/l/n/p/r/t=1-392"/>
</dbReference>
<dbReference type="PDB" id="7AH9">
    <property type="method" value="EM"/>
    <property type="resolution" value="3.30 A"/>
    <property type="chains" value="7A/7B/7C/7D/7E/7F/7G/7H/7I/7J/7K/7L/7M/7N/7O/7P/7Q/7R/7S/7T/7U/7V/7W/7X=1-392"/>
</dbReference>
<dbReference type="PDB" id="7AHI">
    <property type="method" value="EM"/>
    <property type="resolution" value="3.30 A"/>
    <property type="chains" value="7A/7B/7C/7D/7E/7F/7G/7H/7I/7J/7K/7L/7M/7N/7O/7P/7Q/7R/7S/7T/7U/7V/7W/7X=1-392"/>
</dbReference>
<dbReference type="PDBsum" id="2Y9J"/>
<dbReference type="PDBsum" id="3GR0"/>
<dbReference type="PDBsum" id="3GR1"/>
<dbReference type="PDBsum" id="3J1W"/>
<dbReference type="PDBsum" id="3J1X"/>
<dbReference type="PDBsum" id="3J6D"/>
<dbReference type="PDBsum" id="4G1I"/>
<dbReference type="PDBsum" id="4G2S"/>
<dbReference type="PDBsum" id="5TCP"/>
<dbReference type="PDBsum" id="5TCR"/>
<dbReference type="PDBsum" id="6DUZ"/>
<dbReference type="PDBsum" id="6PEM"/>
<dbReference type="PDBsum" id="6PEP"/>
<dbReference type="PDBsum" id="6Q14"/>
<dbReference type="PDBsum" id="6Q15"/>
<dbReference type="PDBsum" id="6Q16"/>
<dbReference type="PDBsum" id="6UOT"/>
<dbReference type="PDBsum" id="6UOV"/>
<dbReference type="PDBsum" id="7AH9"/>
<dbReference type="PDBsum" id="7AHI"/>
<dbReference type="EMDB" id="EMD-11781"/>
<dbReference type="EMDB" id="EMD-1874"/>
<dbReference type="EMDB" id="EMD-20556"/>
<dbReference type="EMDB" id="EMD-20832"/>
<dbReference type="EMDB" id="EMD-20833"/>
<dbReference type="EMDB" id="EMD-8398"/>
<dbReference type="EMDB" id="EMD-8400"/>
<dbReference type="EMDB" id="EMD-8913"/>
<dbReference type="SMR" id="P41783"/>
<dbReference type="DIP" id="DIP-59555N"/>
<dbReference type="IntAct" id="P41783">
    <property type="interactions" value="2"/>
</dbReference>
<dbReference type="STRING" id="99287.STM2874"/>
<dbReference type="TCDB" id="3.A.6.1.3">
    <property type="family name" value="the type iii (virulence-related) secretory pathway (iiisp) family"/>
</dbReference>
<dbReference type="PaxDb" id="99287-STM2874"/>
<dbReference type="GeneID" id="1254397"/>
<dbReference type="KEGG" id="stm:STM2874"/>
<dbReference type="PATRIC" id="fig|99287.12.peg.3030"/>
<dbReference type="HOGENOM" id="CLU_054956_0_0_6"/>
<dbReference type="OMA" id="EMEWAKE"/>
<dbReference type="BioCyc" id="SENT99287:STM2874-MONOMER"/>
<dbReference type="EvolutionaryTrace" id="P41783"/>
<dbReference type="PHI-base" id="PHI:5021"/>
<dbReference type="PHI-base" id="PHI:8371"/>
<dbReference type="Proteomes" id="UP000001014">
    <property type="component" value="Chromosome"/>
</dbReference>
<dbReference type="GO" id="GO:0005886">
    <property type="term" value="C:plasma membrane"/>
    <property type="evidence" value="ECO:0007669"/>
    <property type="project" value="UniProtKB-SubCell"/>
</dbReference>
<dbReference type="Gene3D" id="2.60.200.20">
    <property type="match status" value="1"/>
</dbReference>
<dbReference type="Gene3D" id="3.30.300.170">
    <property type="match status" value="1"/>
</dbReference>
<dbReference type="Gene3D" id="3.30.70.1770">
    <property type="match status" value="1"/>
</dbReference>
<dbReference type="Gene3D" id="3.30.70.1780">
    <property type="match status" value="1"/>
</dbReference>
<dbReference type="InterPro" id="IPR013387">
    <property type="entry name" value="T3SS_PrgH/EprH"/>
</dbReference>
<dbReference type="InterPro" id="IPR019029">
    <property type="entry name" value="T3SS_PrgH/EprH-like"/>
</dbReference>
<dbReference type="NCBIfam" id="TIGR02554">
    <property type="entry name" value="PrgH"/>
    <property type="match status" value="1"/>
</dbReference>
<dbReference type="NCBIfam" id="NF011855">
    <property type="entry name" value="PRK15327.1"/>
    <property type="match status" value="1"/>
</dbReference>
<dbReference type="Pfam" id="PF09480">
    <property type="entry name" value="PrgH"/>
    <property type="match status" value="1"/>
</dbReference>
<name>PRGH_SALTY</name>
<protein>
    <recommendedName>
        <fullName>Protein PrgH</fullName>
    </recommendedName>
</protein>
<proteinExistence type="evidence at protein level"/>
<evidence type="ECO:0000255" key="1"/>
<evidence type="ECO:0000305" key="2"/>
<evidence type="ECO:0007829" key="3">
    <source>
        <dbReference type="PDB" id="3GR0"/>
    </source>
</evidence>
<evidence type="ECO:0007829" key="4">
    <source>
        <dbReference type="PDB" id="4G1I"/>
    </source>
</evidence>
<evidence type="ECO:0007829" key="5">
    <source>
        <dbReference type="PDB" id="4G2S"/>
    </source>
</evidence>
<evidence type="ECO:0007829" key="6">
    <source>
        <dbReference type="PDB" id="6UOT"/>
    </source>
</evidence>
<organism>
    <name type="scientific">Salmonella typhimurium (strain LT2 / SGSC1412 / ATCC 700720)</name>
    <dbReference type="NCBI Taxonomy" id="99287"/>
    <lineage>
        <taxon>Bacteria</taxon>
        <taxon>Pseudomonadati</taxon>
        <taxon>Pseudomonadota</taxon>
        <taxon>Gammaproteobacteria</taxon>
        <taxon>Enterobacterales</taxon>
        <taxon>Enterobacteriaceae</taxon>
        <taxon>Salmonella</taxon>
    </lineage>
</organism>
<reference key="1">
    <citation type="journal article" date="1995" name="Mol. Microbiol.">
        <title>PhoP/PhoQ transcriptional repression of Salmonella typhimurium invasion genes: evidence for a role in protein secretion.</title>
        <authorList>
            <person name="Pegues D.A."/>
            <person name="Hantman M.J."/>
            <person name="Behlau I."/>
            <person name="Miller S.I."/>
        </authorList>
    </citation>
    <scope>NUCLEOTIDE SEQUENCE [GENOMIC DNA]</scope>
    <source>
        <strain>ATCC 14028s / SGSG 2262</strain>
    </source>
</reference>
<reference key="2">
    <citation type="journal article" date="2001" name="Nature">
        <title>Complete genome sequence of Salmonella enterica serovar Typhimurium LT2.</title>
        <authorList>
            <person name="McClelland M."/>
            <person name="Sanderson K.E."/>
            <person name="Spieth J."/>
            <person name="Clifton S.W."/>
            <person name="Latreille P."/>
            <person name="Courtney L."/>
            <person name="Porwollik S."/>
            <person name="Ali J."/>
            <person name="Dante M."/>
            <person name="Du F."/>
            <person name="Hou S."/>
            <person name="Layman D."/>
            <person name="Leonard S."/>
            <person name="Nguyen C."/>
            <person name="Scott K."/>
            <person name="Holmes A."/>
            <person name="Grewal N."/>
            <person name="Mulvaney E."/>
            <person name="Ryan E."/>
            <person name="Sun H."/>
            <person name="Florea L."/>
            <person name="Miller W."/>
            <person name="Stoneking T."/>
            <person name="Nhan M."/>
            <person name="Waterston R."/>
            <person name="Wilson R.K."/>
        </authorList>
    </citation>
    <scope>NUCLEOTIDE SEQUENCE [LARGE SCALE GENOMIC DNA]</scope>
    <source>
        <strain>LT2 / SGSC1412 / ATCC 700720</strain>
    </source>
</reference>
<accession>P41783</accession>
<keyword id="KW-0002">3D-structure</keyword>
<keyword id="KW-1003">Cell membrane</keyword>
<keyword id="KW-0472">Membrane</keyword>
<keyword id="KW-1185">Reference proteome</keyword>
<keyword id="KW-0812">Transmembrane</keyword>
<keyword id="KW-1133">Transmembrane helix</keyword>
<keyword id="KW-0843">Virulence</keyword>